<keyword id="KW-0539">Nucleus</keyword>
<keyword id="KW-1185">Reference proteome</keyword>
<keyword id="KW-0677">Repeat</keyword>
<keyword id="KW-0690">Ribosome biogenesis</keyword>
<keyword id="KW-0698">rRNA processing</keyword>
<accession>C4Y3N8</accession>
<evidence type="ECO:0000250" key="1"/>
<evidence type="ECO:0000256" key="2">
    <source>
        <dbReference type="SAM" id="MobiDB-lite"/>
    </source>
</evidence>
<evidence type="ECO:0000305" key="3"/>
<dbReference type="EMBL" id="CH408078">
    <property type="protein sequence ID" value="EEQ39025.1"/>
    <property type="molecule type" value="Genomic_DNA"/>
</dbReference>
<dbReference type="RefSeq" id="XP_002617707.1">
    <property type="nucleotide sequence ID" value="XM_002617661.1"/>
</dbReference>
<dbReference type="SMR" id="C4Y3N8"/>
<dbReference type="FunCoup" id="C4Y3N8">
    <property type="interactions" value="912"/>
</dbReference>
<dbReference type="STRING" id="306902.C4Y3N8"/>
<dbReference type="GeneID" id="8498109"/>
<dbReference type="KEGG" id="clu:CLUG_03151"/>
<dbReference type="VEuPathDB" id="FungiDB:CLUG_03151"/>
<dbReference type="HOGENOM" id="CLU_008720_1_1_1"/>
<dbReference type="InParanoid" id="C4Y3N8"/>
<dbReference type="OMA" id="CNSYGSH"/>
<dbReference type="OrthoDB" id="83711at4891"/>
<dbReference type="Proteomes" id="UP000007703">
    <property type="component" value="Unassembled WGS sequence"/>
</dbReference>
<dbReference type="GO" id="GO:0030686">
    <property type="term" value="C:90S preribosome"/>
    <property type="evidence" value="ECO:0007669"/>
    <property type="project" value="EnsemblFungi"/>
</dbReference>
<dbReference type="GO" id="GO:0005730">
    <property type="term" value="C:nucleolus"/>
    <property type="evidence" value="ECO:0007669"/>
    <property type="project" value="UniProtKB-SubCell"/>
</dbReference>
<dbReference type="GO" id="GO:0030688">
    <property type="term" value="C:preribosome, small subunit precursor"/>
    <property type="evidence" value="ECO:0007669"/>
    <property type="project" value="EnsemblFungi"/>
</dbReference>
<dbReference type="GO" id="GO:0032040">
    <property type="term" value="C:small-subunit processome"/>
    <property type="evidence" value="ECO:0007669"/>
    <property type="project" value="EnsemblFungi"/>
</dbReference>
<dbReference type="GO" id="GO:0003723">
    <property type="term" value="F:RNA binding"/>
    <property type="evidence" value="ECO:0007669"/>
    <property type="project" value="EnsemblFungi"/>
</dbReference>
<dbReference type="GO" id="GO:0000480">
    <property type="term" value="P:endonucleolytic cleavage in 5'-ETS of tricistronic rRNA transcript (SSU-rRNA, 5.8S rRNA, LSU-rRNA)"/>
    <property type="evidence" value="ECO:0007669"/>
    <property type="project" value="EnsemblFungi"/>
</dbReference>
<dbReference type="GO" id="GO:0000447">
    <property type="term" value="P:endonucleolytic cleavage in ITS1 to separate SSU-rRNA from 5.8S rRNA and LSU-rRNA from tricistronic rRNA transcript (SSU-rRNA, 5.8S rRNA, LSU-rRNA)"/>
    <property type="evidence" value="ECO:0007669"/>
    <property type="project" value="EnsemblFungi"/>
</dbReference>
<dbReference type="GO" id="GO:0000472">
    <property type="term" value="P:endonucleolytic cleavage to generate mature 5'-end of SSU-rRNA from (SSU-rRNA, 5.8S rRNA, LSU-rRNA)"/>
    <property type="evidence" value="ECO:0007669"/>
    <property type="project" value="EnsemblFungi"/>
</dbReference>
<dbReference type="GO" id="GO:0000056">
    <property type="term" value="P:ribosomal small subunit export from nucleus"/>
    <property type="evidence" value="ECO:0007669"/>
    <property type="project" value="EnsemblFungi"/>
</dbReference>
<dbReference type="Gene3D" id="1.25.10.10">
    <property type="entry name" value="Leucine-rich Repeat Variant"/>
    <property type="match status" value="3"/>
</dbReference>
<dbReference type="InterPro" id="IPR011989">
    <property type="entry name" value="ARM-like"/>
</dbReference>
<dbReference type="InterPro" id="IPR016024">
    <property type="entry name" value="ARM-type_fold"/>
</dbReference>
<dbReference type="InterPro" id="IPR040000">
    <property type="entry name" value="NOP9"/>
</dbReference>
<dbReference type="InterPro" id="IPR001313">
    <property type="entry name" value="Pumilio_RNA-bd_rpt"/>
</dbReference>
<dbReference type="PANTHER" id="PTHR13102">
    <property type="entry name" value="NUCLEOLAR PROTEIN 9"/>
    <property type="match status" value="1"/>
</dbReference>
<dbReference type="PANTHER" id="PTHR13102:SF0">
    <property type="entry name" value="NUCLEOLAR PROTEIN 9"/>
    <property type="match status" value="1"/>
</dbReference>
<dbReference type="Pfam" id="PF22493">
    <property type="entry name" value="PUF_NOP9"/>
    <property type="match status" value="1"/>
</dbReference>
<dbReference type="SMART" id="SM00025">
    <property type="entry name" value="Pumilio"/>
    <property type="match status" value="8"/>
</dbReference>
<dbReference type="SUPFAM" id="SSF48371">
    <property type="entry name" value="ARM repeat"/>
    <property type="match status" value="1"/>
</dbReference>
<dbReference type="PROSITE" id="PS50302">
    <property type="entry name" value="PUM"/>
    <property type="match status" value="5"/>
</dbReference>
<gene>
    <name type="primary">NOP9</name>
    <name type="ORF">CLUG_03151</name>
</gene>
<sequence length="715" mass="82601">MPKPRGRRVQSAFKERVENSEATHENSIAETGSDVEISLHEDQPQTSDNKNQGEFSSVFYGLVDSAEIDYFKQAESTLNANVFESDEDRAGFIRSVLEESRGKELKLVTNQICSKLMERLVLLASDRQLKHIFHQFLGHFPALAHHKYSSHVLETLLVRSAALIEKEIVNEYQQDEEDQDENADNDEDNFVASTTMESMFLQMLDQLEPYWSSMIQHQYASHVMRIIILIVSGKELPSSTMANSVLRSKKSKVARKMIEIKDNEDFNRAYQVPSSFKDRLRTIISAVSSPLDTKSARSLAIHKVASPVLQLIIRVEGIVDKERSVWHLIFLSEKAPKDSSEEAFVEYLLSDSVGSHFLEAIIKNDGARMKYIERLYRLYMKDRVLKLARRATTGVYIIQALLLKLKPGEVEHILDEIIPELSSLISISESQNIDLGKAIIDASISRFNYRRDELIEQLFQKFAPNYNVSDPSEDTTTELFENVLQLASSTLGNTRDDWPTAEERRRSLFLEKLMQYDYSFVVCVWLNCMALPQERLMQMCFHGVFSHVIEHALVVKPASEGEPKEVLILRKKFLNLFQGKIFELACNSYGSHIVDKLWDFTVLLPMYKDRIASEMMAQANRVKDSTYGRLVWKNWSMELFVRKKYDWKVLVKEQEENYYAEEGTQGDAMKKKKPIELKMEEIFKKKQYQEERAKREGEDLAGSNQKRMKGRGRNR</sequence>
<reference key="1">
    <citation type="journal article" date="2009" name="Nature">
        <title>Evolution of pathogenicity and sexual reproduction in eight Candida genomes.</title>
        <authorList>
            <person name="Butler G."/>
            <person name="Rasmussen M.D."/>
            <person name="Lin M.F."/>
            <person name="Santos M.A.S."/>
            <person name="Sakthikumar S."/>
            <person name="Munro C.A."/>
            <person name="Rheinbay E."/>
            <person name="Grabherr M."/>
            <person name="Forche A."/>
            <person name="Reedy J.L."/>
            <person name="Agrafioti I."/>
            <person name="Arnaud M.B."/>
            <person name="Bates S."/>
            <person name="Brown A.J.P."/>
            <person name="Brunke S."/>
            <person name="Costanzo M.C."/>
            <person name="Fitzpatrick D.A."/>
            <person name="de Groot P.W.J."/>
            <person name="Harris D."/>
            <person name="Hoyer L.L."/>
            <person name="Hube B."/>
            <person name="Klis F.M."/>
            <person name="Kodira C."/>
            <person name="Lennard N."/>
            <person name="Logue M.E."/>
            <person name="Martin R."/>
            <person name="Neiman A.M."/>
            <person name="Nikolaou E."/>
            <person name="Quail M.A."/>
            <person name="Quinn J."/>
            <person name="Santos M.C."/>
            <person name="Schmitzberger F.F."/>
            <person name="Sherlock G."/>
            <person name="Shah P."/>
            <person name="Silverstein K.A.T."/>
            <person name="Skrzypek M.S."/>
            <person name="Soll D."/>
            <person name="Staggs R."/>
            <person name="Stansfield I."/>
            <person name="Stumpf M.P.H."/>
            <person name="Sudbery P.E."/>
            <person name="Srikantha T."/>
            <person name="Zeng Q."/>
            <person name="Berman J."/>
            <person name="Berriman M."/>
            <person name="Heitman J."/>
            <person name="Gow N.A.R."/>
            <person name="Lorenz M.C."/>
            <person name="Birren B.W."/>
            <person name="Kellis M."/>
            <person name="Cuomo C.A."/>
        </authorList>
    </citation>
    <scope>NUCLEOTIDE SEQUENCE [LARGE SCALE GENOMIC DNA]</scope>
    <source>
        <strain>ATCC 42720</strain>
    </source>
</reference>
<protein>
    <recommendedName>
        <fullName>Nucleolar protein 9</fullName>
    </recommendedName>
    <alternativeName>
        <fullName>Pumilio domain-containing protein NOP9</fullName>
    </alternativeName>
</protein>
<name>NOP9_CLAL4</name>
<feature type="chain" id="PRO_0000407808" description="Nucleolar protein 9">
    <location>
        <begin position="1"/>
        <end position="715"/>
    </location>
</feature>
<feature type="repeat" description="Pumilio 1">
    <location>
        <begin position="99"/>
        <end position="134"/>
    </location>
</feature>
<feature type="repeat" description="Pumilio 2">
    <location>
        <begin position="135"/>
        <end position="170"/>
    </location>
</feature>
<feature type="repeat" description="Pumilio 3">
    <location>
        <begin position="206"/>
        <end position="243"/>
    </location>
</feature>
<feature type="repeat" description="Pumilio 4">
    <location>
        <begin position="291"/>
        <end position="326"/>
    </location>
</feature>
<feature type="repeat" description="Pumilio 5">
    <location>
        <begin position="340"/>
        <end position="377"/>
    </location>
</feature>
<feature type="repeat" description="Pumilio 6">
    <location>
        <begin position="379"/>
        <end position="415"/>
    </location>
</feature>
<feature type="repeat" description="Pumilio 7">
    <location>
        <begin position="531"/>
        <end position="568"/>
    </location>
</feature>
<feature type="repeat" description="Pumilio 8">
    <location>
        <begin position="575"/>
        <end position="613"/>
    </location>
</feature>
<feature type="region of interest" description="Disordered" evidence="2">
    <location>
        <begin position="1"/>
        <end position="52"/>
    </location>
</feature>
<feature type="region of interest" description="Disordered" evidence="2">
    <location>
        <begin position="688"/>
        <end position="715"/>
    </location>
</feature>
<feature type="compositionally biased region" description="Basic and acidic residues" evidence="2">
    <location>
        <begin position="13"/>
        <end position="24"/>
    </location>
</feature>
<feature type="compositionally biased region" description="Basic and acidic residues" evidence="2">
    <location>
        <begin position="688"/>
        <end position="698"/>
    </location>
</feature>
<feature type="compositionally biased region" description="Basic residues" evidence="2">
    <location>
        <begin position="706"/>
        <end position="715"/>
    </location>
</feature>
<comment type="function">
    <text evidence="1">RNA-binding nucleolar protein required for pre-rRNA processing. Involved in production of 18S rRNA and assembly of small ribosomal subunit (By similarity).</text>
</comment>
<comment type="subcellular location">
    <subcellularLocation>
        <location evidence="1">Nucleus</location>
        <location evidence="1">Nucleolus</location>
    </subcellularLocation>
</comment>
<comment type="similarity">
    <text evidence="3">Belongs to the NOP9 family.</text>
</comment>
<organism>
    <name type="scientific">Clavispora lusitaniae (strain ATCC 42720)</name>
    <name type="common">Yeast</name>
    <name type="synonym">Candida lusitaniae</name>
    <dbReference type="NCBI Taxonomy" id="306902"/>
    <lineage>
        <taxon>Eukaryota</taxon>
        <taxon>Fungi</taxon>
        <taxon>Dikarya</taxon>
        <taxon>Ascomycota</taxon>
        <taxon>Saccharomycotina</taxon>
        <taxon>Pichiomycetes</taxon>
        <taxon>Metschnikowiaceae</taxon>
        <taxon>Clavispora</taxon>
    </lineage>
</organism>
<proteinExistence type="inferred from homology"/>